<comment type="similarity">
    <text evidence="1">Belongs to the bacterial ribosomal protein bS21 family.</text>
</comment>
<comment type="sequence caution" evidence="2">
    <conflict type="erroneous initiation">
        <sequence resource="EMBL-CDS" id="ABA48583"/>
    </conflict>
    <text>Extended N-terminus.</text>
</comment>
<name>RS211_BURP1</name>
<dbReference type="EMBL" id="CP000124">
    <property type="protein sequence ID" value="ABA48583.1"/>
    <property type="status" value="ALT_INIT"/>
    <property type="molecule type" value="Genomic_DNA"/>
</dbReference>
<dbReference type="SMR" id="Q3JY47"/>
<dbReference type="EnsemblBacteria" id="ABA48583">
    <property type="protein sequence ID" value="ABA48583"/>
    <property type="gene ID" value="BURPS1710b_0089"/>
</dbReference>
<dbReference type="KEGG" id="bpm:BURPS1710b_0089"/>
<dbReference type="HOGENOM" id="CLU_2010976_0_0_4"/>
<dbReference type="Proteomes" id="UP000002700">
    <property type="component" value="Chromosome I"/>
</dbReference>
<dbReference type="GO" id="GO:1990904">
    <property type="term" value="C:ribonucleoprotein complex"/>
    <property type="evidence" value="ECO:0007669"/>
    <property type="project" value="UniProtKB-KW"/>
</dbReference>
<dbReference type="GO" id="GO:0005840">
    <property type="term" value="C:ribosome"/>
    <property type="evidence" value="ECO:0007669"/>
    <property type="project" value="UniProtKB-KW"/>
</dbReference>
<dbReference type="GO" id="GO:0003735">
    <property type="term" value="F:structural constituent of ribosome"/>
    <property type="evidence" value="ECO:0007669"/>
    <property type="project" value="InterPro"/>
</dbReference>
<dbReference type="GO" id="GO:0006412">
    <property type="term" value="P:translation"/>
    <property type="evidence" value="ECO:0007669"/>
    <property type="project" value="UniProtKB-UniRule"/>
</dbReference>
<dbReference type="Gene3D" id="1.20.5.1150">
    <property type="entry name" value="Ribosomal protein S8"/>
    <property type="match status" value="1"/>
</dbReference>
<dbReference type="HAMAP" id="MF_00358">
    <property type="entry name" value="Ribosomal_bS21"/>
    <property type="match status" value="1"/>
</dbReference>
<dbReference type="InterPro" id="IPR001911">
    <property type="entry name" value="Ribosomal_bS21"/>
</dbReference>
<dbReference type="InterPro" id="IPR038380">
    <property type="entry name" value="Ribosomal_bS21_sf"/>
</dbReference>
<dbReference type="NCBIfam" id="TIGR00030">
    <property type="entry name" value="S21p"/>
    <property type="match status" value="1"/>
</dbReference>
<dbReference type="PANTHER" id="PTHR21109">
    <property type="entry name" value="MITOCHONDRIAL 28S RIBOSOMAL PROTEIN S21"/>
    <property type="match status" value="1"/>
</dbReference>
<dbReference type="PANTHER" id="PTHR21109:SF22">
    <property type="entry name" value="SMALL RIBOSOMAL SUBUNIT PROTEIN BS21"/>
    <property type="match status" value="1"/>
</dbReference>
<dbReference type="Pfam" id="PF01165">
    <property type="entry name" value="Ribosomal_S21"/>
    <property type="match status" value="1"/>
</dbReference>
<dbReference type="PRINTS" id="PR00976">
    <property type="entry name" value="RIBOSOMALS21"/>
</dbReference>
<protein>
    <recommendedName>
        <fullName evidence="1">Small ribosomal subunit protein bS21A</fullName>
    </recommendedName>
    <alternativeName>
        <fullName evidence="2">30S ribosomal protein S21 1</fullName>
    </alternativeName>
</protein>
<feature type="chain" id="PRO_0000266640" description="Small ribosomal subunit protein bS21A">
    <location>
        <begin position="1"/>
        <end position="70"/>
    </location>
</feature>
<organism>
    <name type="scientific">Burkholderia pseudomallei (strain 1710b)</name>
    <dbReference type="NCBI Taxonomy" id="320372"/>
    <lineage>
        <taxon>Bacteria</taxon>
        <taxon>Pseudomonadati</taxon>
        <taxon>Pseudomonadota</taxon>
        <taxon>Betaproteobacteria</taxon>
        <taxon>Burkholderiales</taxon>
        <taxon>Burkholderiaceae</taxon>
        <taxon>Burkholderia</taxon>
        <taxon>pseudomallei group</taxon>
    </lineage>
</organism>
<reference key="1">
    <citation type="journal article" date="2010" name="Genome Biol. Evol.">
        <title>Continuing evolution of Burkholderia mallei through genome reduction and large-scale rearrangements.</title>
        <authorList>
            <person name="Losada L."/>
            <person name="Ronning C.M."/>
            <person name="DeShazer D."/>
            <person name="Woods D."/>
            <person name="Fedorova N."/>
            <person name="Kim H.S."/>
            <person name="Shabalina S.A."/>
            <person name="Pearson T.R."/>
            <person name="Brinkac L."/>
            <person name="Tan P."/>
            <person name="Nandi T."/>
            <person name="Crabtree J."/>
            <person name="Badger J."/>
            <person name="Beckstrom-Sternberg S."/>
            <person name="Saqib M."/>
            <person name="Schutzer S.E."/>
            <person name="Keim P."/>
            <person name="Nierman W.C."/>
        </authorList>
    </citation>
    <scope>NUCLEOTIDE SEQUENCE [LARGE SCALE GENOMIC DNA]</scope>
    <source>
        <strain>1710b</strain>
    </source>
</reference>
<evidence type="ECO:0000255" key="1">
    <source>
        <dbReference type="HAMAP-Rule" id="MF_00358"/>
    </source>
</evidence>
<evidence type="ECO:0000305" key="2"/>
<proteinExistence type="inferred from homology"/>
<keyword id="KW-0687">Ribonucleoprotein</keyword>
<keyword id="KW-0689">Ribosomal protein</keyword>
<accession>Q3JY47</accession>
<sequence length="70" mass="8363">MTTILLKENEPFEVAIRRFRRAIEKNGLIAELRERQAYEKPTAVRKRKKAAAVKRLHKRLRSQMLPKKLH</sequence>
<gene>
    <name evidence="1" type="primary">rpsU1</name>
    <name type="ordered locus">BURPS1710b_0089</name>
</gene>